<reference key="1">
    <citation type="journal article" date="1997" name="J. Bacteriol.">
        <title>Complete genome sequence of Methanobacterium thermoautotrophicum deltaH: functional analysis and comparative genomics.</title>
        <authorList>
            <person name="Smith D.R."/>
            <person name="Doucette-Stamm L.A."/>
            <person name="Deloughery C."/>
            <person name="Lee H.-M."/>
            <person name="Dubois J."/>
            <person name="Aldredge T."/>
            <person name="Bashirzadeh R."/>
            <person name="Blakely D."/>
            <person name="Cook R."/>
            <person name="Gilbert K."/>
            <person name="Harrison D."/>
            <person name="Hoang L."/>
            <person name="Keagle P."/>
            <person name="Lumm W."/>
            <person name="Pothier B."/>
            <person name="Qiu D."/>
            <person name="Spadafora R."/>
            <person name="Vicare R."/>
            <person name="Wang Y."/>
            <person name="Wierzbowski J."/>
            <person name="Gibson R."/>
            <person name="Jiwani N."/>
            <person name="Caruso A."/>
            <person name="Bush D."/>
            <person name="Safer H."/>
            <person name="Patwell D."/>
            <person name="Prabhakar S."/>
            <person name="McDougall S."/>
            <person name="Shimer G."/>
            <person name="Goyal A."/>
            <person name="Pietrovski S."/>
            <person name="Church G.M."/>
            <person name="Daniels C.J."/>
            <person name="Mao J.-I."/>
            <person name="Rice P."/>
            <person name="Noelling J."/>
            <person name="Reeve J.N."/>
        </authorList>
    </citation>
    <scope>NUCLEOTIDE SEQUENCE [LARGE SCALE GENOMIC DNA]</scope>
    <source>
        <strain>ATCC 29096 / DSM 1053 / JCM 10044 / NBRC 100330 / Delta H</strain>
    </source>
</reference>
<dbReference type="EC" id="4.2.1.182" evidence="2"/>
<dbReference type="EMBL" id="AE000666">
    <property type="protein sequence ID" value="AAB85898.1"/>
    <property type="molecule type" value="Genomic_DNA"/>
</dbReference>
<dbReference type="PIR" id="D69056">
    <property type="entry name" value="D69056"/>
</dbReference>
<dbReference type="SMR" id="O27472"/>
<dbReference type="FunCoup" id="O27472">
    <property type="interactions" value="11"/>
</dbReference>
<dbReference type="STRING" id="187420.MTH_1421"/>
<dbReference type="PaxDb" id="187420-MTH_1421"/>
<dbReference type="EnsemblBacteria" id="AAB85898">
    <property type="protein sequence ID" value="AAB85898"/>
    <property type="gene ID" value="MTH_1421"/>
</dbReference>
<dbReference type="KEGG" id="mth:MTH_1421"/>
<dbReference type="PATRIC" id="fig|187420.15.peg.1385"/>
<dbReference type="HOGENOM" id="CLU_018825_1_0_2"/>
<dbReference type="InParanoid" id="O27472"/>
<dbReference type="UniPathway" id="UPA00057"/>
<dbReference type="Proteomes" id="UP000005223">
    <property type="component" value="Chromosome"/>
</dbReference>
<dbReference type="GO" id="GO:0051539">
    <property type="term" value="F:4 iron, 4 sulfur cluster binding"/>
    <property type="evidence" value="ECO:0007669"/>
    <property type="project" value="UniProtKB-KW"/>
</dbReference>
<dbReference type="GO" id="GO:0016829">
    <property type="term" value="F:lyase activity"/>
    <property type="evidence" value="ECO:0007669"/>
    <property type="project" value="UniProtKB-KW"/>
</dbReference>
<dbReference type="GO" id="GO:0046872">
    <property type="term" value="F:metal ion binding"/>
    <property type="evidence" value="ECO:0007669"/>
    <property type="project" value="UniProtKB-KW"/>
</dbReference>
<dbReference type="GO" id="GO:0008299">
    <property type="term" value="P:isoprenoid biosynthetic process"/>
    <property type="evidence" value="ECO:0007669"/>
    <property type="project" value="UniProtKB-KW"/>
</dbReference>
<dbReference type="CDD" id="cd01355">
    <property type="entry name" value="AcnX"/>
    <property type="match status" value="1"/>
</dbReference>
<dbReference type="InterPro" id="IPR007506">
    <property type="entry name" value="PMDh-L-like_dom"/>
</dbReference>
<dbReference type="PANTHER" id="PTHR36577">
    <property type="entry name" value="DUF521 DOMAIN PROTEIN (AFU_ORTHOLOGUE AFUA_6G00490)"/>
    <property type="match status" value="1"/>
</dbReference>
<dbReference type="PANTHER" id="PTHR36577:SF3">
    <property type="entry name" value="DUF521 DOMAIN PROTEIN (AFU_ORTHOLOGUE AFUA_6G00490)"/>
    <property type="match status" value="1"/>
</dbReference>
<dbReference type="Pfam" id="PF04412">
    <property type="entry name" value="AcnX"/>
    <property type="match status" value="1"/>
</dbReference>
<name>PMDHL_METTH</name>
<protein>
    <recommendedName>
        <fullName evidence="2">Phosphomevalonate dehydratase large subunit</fullName>
        <shortName evidence="2">PMDh large subunit</shortName>
        <shortName evidence="2">PMDh-L</shortName>
        <ecNumber evidence="2">4.2.1.182</ecNumber>
    </recommendedName>
</protein>
<accession>O27472</accession>
<sequence length="399" mass="42593">MCGVGKVYLDRTEERMYDGEFGETVQQSMEILVALGDIYGAERMVDISSAQVSGVSYKTIGDAGLEYLEDLRARGAGVKVASTLNPAGMDLQRWREMGFSEEFARRQIRIVEAYSAMDVMNTCTCTPYLIGNVPLRGSHVAWSESSAVSYANSVLGARTNREGGPGALAAAICGKTPEYGYHLQENRRATLRVDVECELSGSDYGALGYITGKIAGEGVPYFTFTGHPSADDLKALGAAMASSGAVALYHVDGVTPEYMEASPDEAGDSITVDAGDILEAREELSTTDDDPDLICLGCPHCSLDEIRRIASFLRKNKPACDLWVCTSAAIGSAASRMGYTDVIEAAGGMVVSDTCMVVAPVEDLGYEVLGVDSAKAANYVPGMCGLDAVYDDWMNLIRP</sequence>
<proteinExistence type="inferred from homology"/>
<keyword id="KW-0004">4Fe-4S</keyword>
<keyword id="KW-0408">Iron</keyword>
<keyword id="KW-0411">Iron-sulfur</keyword>
<keyword id="KW-0414">Isoprene biosynthesis</keyword>
<keyword id="KW-0456">Lyase</keyword>
<keyword id="KW-0479">Metal-binding</keyword>
<keyword id="KW-1185">Reference proteome</keyword>
<comment type="function">
    <text evidence="2">Component of a hydro-lyase that catalyzes the dehydration of mevalonate 5-phosphate (MVA5P) to form trans-anhydromevalonate 5-phosphate (tAHMP) (By similarity). Involved in the archaeal mevalonate (MVA) pathway, which provides fundamental precursors for isoprenoid biosynthesis, such as isopentenyl diphosphate (IPP) and dimethylallyl diphosphate (DMAPP) (By similarity).</text>
</comment>
<comment type="catalytic activity">
    <reaction evidence="2">
        <text>(R)-5-phosphomevalonate = (2E)-3-methyl-5-phosphooxypent-2-enoate + H2O</text>
        <dbReference type="Rhea" id="RHEA:78975"/>
        <dbReference type="ChEBI" id="CHEBI:15377"/>
        <dbReference type="ChEBI" id="CHEBI:58146"/>
        <dbReference type="ChEBI" id="CHEBI:229665"/>
        <dbReference type="EC" id="4.2.1.182"/>
    </reaction>
    <physiologicalReaction direction="left-to-right" evidence="2">
        <dbReference type="Rhea" id="RHEA:78976"/>
    </physiologicalReaction>
</comment>
<comment type="cofactor">
    <cofactor evidence="2">
        <name>[4Fe-4S] cluster</name>
        <dbReference type="ChEBI" id="CHEBI:49883"/>
    </cofactor>
    <text evidence="2">Binds 1 [4Fe-4S] cluster per subunit.</text>
</comment>
<comment type="pathway">
    <text evidence="2">Isoprenoid biosynthesis; isopentenyl diphosphate biosynthesis via mevalonate pathway.</text>
</comment>
<comment type="subunit">
    <text evidence="2">Heterodimer composed of a large subunit (PMDh-L) and a small subunit (PMDh-S).</text>
</comment>
<comment type="similarity">
    <text evidence="3">Belongs to the AcnX type II large subunit family.</text>
</comment>
<organism>
    <name type="scientific">Methanothermobacter thermautotrophicus (strain ATCC 29096 / DSM 1053 / JCM 10044 / NBRC 100330 / Delta H)</name>
    <name type="common">Methanobacterium thermoautotrophicum</name>
    <dbReference type="NCBI Taxonomy" id="187420"/>
    <lineage>
        <taxon>Archaea</taxon>
        <taxon>Methanobacteriati</taxon>
        <taxon>Methanobacteriota</taxon>
        <taxon>Methanomada group</taxon>
        <taxon>Methanobacteria</taxon>
        <taxon>Methanobacteriales</taxon>
        <taxon>Methanobacteriaceae</taxon>
        <taxon>Methanothermobacter</taxon>
    </lineage>
</organism>
<feature type="chain" id="PRO_0000107271" description="Phosphomevalonate dehydratase large subunit">
    <location>
        <begin position="1"/>
        <end position="399"/>
    </location>
</feature>
<feature type="binding site" evidence="1">
    <location>
        <position position="54"/>
    </location>
    <ligand>
        <name>(R)-5-phosphomevalonate</name>
        <dbReference type="ChEBI" id="CHEBI:58146"/>
    </ligand>
</feature>
<feature type="binding site" evidence="1">
    <location>
        <position position="55"/>
    </location>
    <ligand>
        <name>(R)-5-phosphomevalonate</name>
        <dbReference type="ChEBI" id="CHEBI:58146"/>
    </ligand>
</feature>
<feature type="binding site" evidence="1">
    <location>
        <position position="56"/>
    </location>
    <ligand>
        <name>(R)-5-phosphomevalonate</name>
        <dbReference type="ChEBI" id="CHEBI:58146"/>
    </ligand>
</feature>
<feature type="binding site" evidence="1">
    <location>
        <position position="85"/>
    </location>
    <ligand>
        <name>(R)-5-phosphomevalonate</name>
        <dbReference type="ChEBI" id="CHEBI:58146"/>
    </ligand>
</feature>
<feature type="binding site" evidence="1">
    <location>
        <position position="86"/>
    </location>
    <ligand>
        <name>(R)-5-phosphomevalonate</name>
        <dbReference type="ChEBI" id="CHEBI:58146"/>
    </ligand>
</feature>
<feature type="binding site" evidence="1">
    <location>
        <position position="125"/>
    </location>
    <ligand>
        <name>[4Fe-4S] cluster</name>
        <dbReference type="ChEBI" id="CHEBI:49883"/>
    </ligand>
</feature>
<feature type="binding site" evidence="1">
    <location>
        <position position="144"/>
    </location>
    <ligand>
        <name>(R)-5-phosphomevalonate</name>
        <dbReference type="ChEBI" id="CHEBI:58146"/>
    </ligand>
</feature>
<feature type="binding site" evidence="1">
    <location>
        <position position="145"/>
    </location>
    <ligand>
        <name>(R)-5-phosphomevalonate</name>
        <dbReference type="ChEBI" id="CHEBI:58146"/>
    </ligand>
</feature>
<feature type="binding site" evidence="1">
    <location>
        <position position="298"/>
    </location>
    <ligand>
        <name>[4Fe-4S] cluster</name>
        <dbReference type="ChEBI" id="CHEBI:49883"/>
    </ligand>
</feature>
<feature type="binding site" evidence="1">
    <location>
        <position position="355"/>
    </location>
    <ligand>
        <name>[4Fe-4S] cluster</name>
        <dbReference type="ChEBI" id="CHEBI:49883"/>
    </ligand>
</feature>
<feature type="binding site" evidence="1">
    <location>
        <position position="375"/>
    </location>
    <ligand>
        <name>(R)-5-phosphomevalonate</name>
        <dbReference type="ChEBI" id="CHEBI:58146"/>
    </ligand>
</feature>
<evidence type="ECO:0000250" key="1">
    <source>
        <dbReference type="UniProtKB" id="Q5JGJ6"/>
    </source>
</evidence>
<evidence type="ECO:0000250" key="2">
    <source>
        <dbReference type="UniProtKB" id="Q9YA51"/>
    </source>
</evidence>
<evidence type="ECO:0000305" key="3"/>
<gene>
    <name type="ordered locus">MTH_1421</name>
</gene>